<keyword id="KW-0158">Chromosome</keyword>
<keyword id="KW-0238">DNA-binding</keyword>
<keyword id="KW-0539">Nucleus</keyword>
<keyword id="KW-1185">Reference proteome</keyword>
<keyword id="KW-0779">Telomere</keyword>
<comment type="function">
    <text evidence="2 3 4 5">Telomeric DNA-binding protein, which binds to two or more single-stranded G-rich repeat sequences (G-strand), with high specificity to the 5'-TTAGGC-3' sequence (PubMed:18329362, PubMed:23390606). In addition, repeat sequence binding requires a 3' single-stranded telomeric overhang (PubMed:18329362). Acts redundantly with pot-1 to negatively regulate telomerase-mediated telomere extension (PubMed:18329362, PubMed:23390606, PubMed:24297748). Also regulates telomere length by the telomerase-independent telomere maintenance pathway called ALT (alternative lengthening of telomeres) (PubMed:22547822, PubMed:23390606, PubMed:24297748). Does not appear to have a role in anchoring telomeres to the nuclear envelope (PubMed:24297748).</text>
</comment>
<comment type="subcellular location">
    <subcellularLocation>
        <location evidence="8 9">Nucleus</location>
    </subcellularLocation>
    <subcellularLocation>
        <location evidence="8 9">Chromosome</location>
        <location evidence="8 9">Telomere</location>
    </subcellularLocation>
</comment>
<comment type="similarity">
    <text evidence="7">Belongs to the telombin family.</text>
</comment>
<reference evidence="10" key="1">
    <citation type="journal article" date="1998" name="Science">
        <title>Genome sequence of the nematode C. elegans: a platform for investigating biology.</title>
        <authorList>
            <consortium name="The C. elegans sequencing consortium"/>
        </authorList>
    </citation>
    <scope>NUCLEOTIDE SEQUENCE [LARGE SCALE GENOMIC DNA]</scope>
    <source>
        <strain evidence="10">Bristol N2</strain>
    </source>
</reference>
<reference evidence="7" key="2">
    <citation type="journal article" date="2008" name="Cell">
        <title>C. elegans telomeres contain G-strand and C-strand overhangs that are bound by distinct proteins.</title>
        <authorList>
            <person name="Raices M."/>
            <person name="Verdun R.E."/>
            <person name="Compton S.A."/>
            <person name="Haggblom C.I."/>
            <person name="Griffith J.D."/>
            <person name="Dillin A."/>
            <person name="Karlseder J."/>
        </authorList>
    </citation>
    <scope>FUNCTION</scope>
    <scope>SUBCELLULAR LOCATION</scope>
</reference>
<reference evidence="7" key="3">
    <citation type="journal article" date="2012" name="Proc. Natl. Acad. Sci. U.S.A.">
        <title>Caenorhabditis elegans POT-2 telomere protein represses a mode of alternative lengthening of telomeres with normal telomere lengths.</title>
        <authorList>
            <person name="Cheng C."/>
            <person name="Shtessel L."/>
            <person name="Brady M.M."/>
            <person name="Ahmed S."/>
        </authorList>
    </citation>
    <scope>FUNCTION</scope>
</reference>
<reference evidence="7" key="4">
    <citation type="journal article" date="2013" name="G3 (Bethesda)">
        <title>Caenorhabditis elegans POT-1 and POT-2 repress telomere maintenance pathways.</title>
        <authorList>
            <person name="Shtessel L."/>
            <person name="Lowden M.R."/>
            <person name="Cheng C."/>
            <person name="Simon M."/>
            <person name="Wang K."/>
            <person name="Ahmed S."/>
        </authorList>
    </citation>
    <scope>FUNCTION</scope>
    <scope>SUBCELLULAR LOCATION</scope>
</reference>
<reference evidence="7" key="5">
    <citation type="journal article" date="2013" name="J. Cell Biol.">
        <title>The shelterin protein POT-1 anchors Caenorhabditis elegans telomeres through SUN-1 at the nuclear periphery.</title>
        <authorList>
            <person name="Ferreira H.C."/>
            <person name="Towbin B.D."/>
            <person name="Jegou T."/>
            <person name="Gasser S.M."/>
        </authorList>
    </citation>
    <scope>FUNCTION</scope>
</reference>
<organism evidence="10">
    <name type="scientific">Caenorhabditis elegans</name>
    <dbReference type="NCBI Taxonomy" id="6239"/>
    <lineage>
        <taxon>Eukaryota</taxon>
        <taxon>Metazoa</taxon>
        <taxon>Ecdysozoa</taxon>
        <taxon>Nematoda</taxon>
        <taxon>Chromadorea</taxon>
        <taxon>Rhabditida</taxon>
        <taxon>Rhabditina</taxon>
        <taxon>Rhabditomorpha</taxon>
        <taxon>Rhabditoidea</taxon>
        <taxon>Rhabditidae</taxon>
        <taxon>Peloderinae</taxon>
        <taxon>Caenorhabditis</taxon>
    </lineage>
</organism>
<gene>
    <name evidence="11" type="primary">pot-2</name>
    <name evidence="6" type="synonym">CeOB1</name>
    <name evidence="11" type="ORF">F57C2.3</name>
</gene>
<dbReference type="EMBL" id="BX284602">
    <property type="protein sequence ID" value="CAB05525.1"/>
    <property type="molecule type" value="Genomic_DNA"/>
</dbReference>
<dbReference type="PIR" id="T22839">
    <property type="entry name" value="T22839"/>
</dbReference>
<dbReference type="RefSeq" id="NP_497017.1">
    <property type="nucleotide sequence ID" value="NM_064616.5"/>
</dbReference>
<dbReference type="SMR" id="O45595"/>
<dbReference type="FunCoup" id="O45595">
    <property type="interactions" value="2"/>
</dbReference>
<dbReference type="STRING" id="6239.F57C2.3.1"/>
<dbReference type="PaxDb" id="6239-F57C2.3"/>
<dbReference type="PeptideAtlas" id="O45595"/>
<dbReference type="EnsemblMetazoa" id="F57C2.3.1">
    <property type="protein sequence ID" value="F57C2.3.1"/>
    <property type="gene ID" value="WBGene00010195"/>
</dbReference>
<dbReference type="GeneID" id="175110"/>
<dbReference type="KEGG" id="cel:CELE_F57C2.3"/>
<dbReference type="UCSC" id="F57C2.3">
    <property type="organism name" value="c. elegans"/>
</dbReference>
<dbReference type="AGR" id="WB:WBGene00010195"/>
<dbReference type="CTD" id="175110"/>
<dbReference type="WormBase" id="F57C2.3">
    <property type="protein sequence ID" value="CE16154"/>
    <property type="gene ID" value="WBGene00010195"/>
    <property type="gene designation" value="pot-2"/>
</dbReference>
<dbReference type="eggNOG" id="KOG1361">
    <property type="taxonomic scope" value="Eukaryota"/>
</dbReference>
<dbReference type="GeneTree" id="ENSGT00940000158175"/>
<dbReference type="HOGENOM" id="CLU_096926_0_0_1"/>
<dbReference type="InParanoid" id="O45595"/>
<dbReference type="OMA" id="TINGAQM"/>
<dbReference type="OrthoDB" id="262529at2759"/>
<dbReference type="PhylomeDB" id="O45595"/>
<dbReference type="PRO" id="PR:O45595"/>
<dbReference type="Proteomes" id="UP000001940">
    <property type="component" value="Chromosome II"/>
</dbReference>
<dbReference type="Bgee" id="WBGene00010195">
    <property type="expression patterns" value="Expressed in germ line (C elegans) and 3 other cell types or tissues"/>
</dbReference>
<dbReference type="GO" id="GO:0000781">
    <property type="term" value="C:chromosome, telomeric region"/>
    <property type="evidence" value="ECO:0000314"/>
    <property type="project" value="WormBase"/>
</dbReference>
<dbReference type="GO" id="GO:0005634">
    <property type="term" value="C:nucleus"/>
    <property type="evidence" value="ECO:0007669"/>
    <property type="project" value="UniProtKB-SubCell"/>
</dbReference>
<dbReference type="GO" id="GO:0098505">
    <property type="term" value="F:G-rich strand telomeric DNA binding"/>
    <property type="evidence" value="ECO:0000314"/>
    <property type="project" value="WormBase"/>
</dbReference>
<dbReference type="GO" id="GO:0043047">
    <property type="term" value="F:single-stranded telomeric DNA binding"/>
    <property type="evidence" value="ECO:0000250"/>
    <property type="project" value="WormBase"/>
</dbReference>
<dbReference type="GO" id="GO:1904357">
    <property type="term" value="P:negative regulation of telomere maintenance via telomere lengthening"/>
    <property type="evidence" value="ECO:0000315"/>
    <property type="project" value="WormBase"/>
</dbReference>
<dbReference type="GO" id="GO:0000723">
    <property type="term" value="P:telomere maintenance"/>
    <property type="evidence" value="ECO:0000315"/>
    <property type="project" value="WormBase"/>
</dbReference>
<dbReference type="FunFam" id="2.40.50.140:FF:000635">
    <property type="entry name" value="MoRTal germline"/>
    <property type="match status" value="1"/>
</dbReference>
<dbReference type="Gene3D" id="2.40.50.140">
    <property type="entry name" value="Nucleic acid-binding proteins"/>
    <property type="match status" value="1"/>
</dbReference>
<dbReference type="InterPro" id="IPR012340">
    <property type="entry name" value="NA-bd_OB-fold"/>
</dbReference>
<dbReference type="InterPro" id="IPR032042">
    <property type="entry name" value="POT1PC"/>
</dbReference>
<dbReference type="Pfam" id="PF16686">
    <property type="entry name" value="POT1PC"/>
    <property type="match status" value="1"/>
</dbReference>
<dbReference type="SUPFAM" id="SSF50249">
    <property type="entry name" value="Nucleic acid-binding proteins"/>
    <property type="match status" value="1"/>
</dbReference>
<accession>O45595</accession>
<name>POT2_CAEEL</name>
<protein>
    <recommendedName>
        <fullName evidence="7">Protection of telomeres homolog 2</fullName>
    </recommendedName>
</protein>
<feature type="chain" id="PRO_0000448581" description="Protection of telomeres homolog 2">
    <location>
        <begin position="1"/>
        <end position="251"/>
    </location>
</feature>
<feature type="region of interest" description="Disordered" evidence="1">
    <location>
        <begin position="221"/>
        <end position="251"/>
    </location>
</feature>
<evidence type="ECO:0000256" key="1">
    <source>
        <dbReference type="SAM" id="MobiDB-lite"/>
    </source>
</evidence>
<evidence type="ECO:0000269" key="2">
    <source>
    </source>
</evidence>
<evidence type="ECO:0000269" key="3">
    <source>
    </source>
</evidence>
<evidence type="ECO:0000269" key="4">
    <source>
    </source>
</evidence>
<evidence type="ECO:0000269" key="5">
    <source>
    </source>
</evidence>
<evidence type="ECO:0000303" key="6">
    <source>
    </source>
</evidence>
<evidence type="ECO:0000305" key="7"/>
<evidence type="ECO:0000305" key="8">
    <source>
    </source>
</evidence>
<evidence type="ECO:0000305" key="9">
    <source>
    </source>
</evidence>
<evidence type="ECO:0000312" key="10">
    <source>
        <dbReference type="Proteomes" id="UP000001940"/>
    </source>
</evidence>
<evidence type="ECO:0000312" key="11">
    <source>
        <dbReference type="WormBase" id="F57C2.3"/>
    </source>
</evidence>
<sequence>MSSFDRRIEAACKFDDERYYKQYHRYFDVLAQVHSVVETINGAQMLRVWRGRKFGPGASAERRERRLFHVTQDSFKRYIVPPNPRIGKAIEENGKELLIEIDVYDDHRDGLKNLNSGDFVAIQNVHAASTRQTEMQVLHGGGASYQRGITTVPVDFEHEAFQNFKKKVEAVLETVAYDENFTEFQQPEEVAENHVDEEPQEEALPRGVVLRTETCDFMDMELDNWPEGPPKTFAEAIARANNSRRPRDPPQ</sequence>
<proteinExistence type="inferred from homology"/>